<name>MYO1_NEOFI</name>
<gene>
    <name type="primary">myoA</name>
    <name type="ORF">NFIA_098420</name>
</gene>
<reference key="1">
    <citation type="journal article" date="2008" name="PLoS Genet.">
        <title>Genomic islands in the pathogenic filamentous fungus Aspergillus fumigatus.</title>
        <authorList>
            <person name="Fedorova N.D."/>
            <person name="Khaldi N."/>
            <person name="Joardar V.S."/>
            <person name="Maiti R."/>
            <person name="Amedeo P."/>
            <person name="Anderson M.J."/>
            <person name="Crabtree J."/>
            <person name="Silva J.C."/>
            <person name="Badger J.H."/>
            <person name="Albarraq A."/>
            <person name="Angiuoli S."/>
            <person name="Bussey H."/>
            <person name="Bowyer P."/>
            <person name="Cotty P.J."/>
            <person name="Dyer P.S."/>
            <person name="Egan A."/>
            <person name="Galens K."/>
            <person name="Fraser-Liggett C.M."/>
            <person name="Haas B.J."/>
            <person name="Inman J.M."/>
            <person name="Kent R."/>
            <person name="Lemieux S."/>
            <person name="Malavazi I."/>
            <person name="Orvis J."/>
            <person name="Roemer T."/>
            <person name="Ronning C.M."/>
            <person name="Sundaram J.P."/>
            <person name="Sutton G."/>
            <person name="Turner G."/>
            <person name="Venter J.C."/>
            <person name="White O.R."/>
            <person name="Whitty B.R."/>
            <person name="Youngman P."/>
            <person name="Wolfe K.H."/>
            <person name="Goldman G.H."/>
            <person name="Wortman J.R."/>
            <person name="Jiang B."/>
            <person name="Denning D.W."/>
            <person name="Nierman W.C."/>
        </authorList>
    </citation>
    <scope>NUCLEOTIDE SEQUENCE [LARGE SCALE GENOMIC DNA]</scope>
    <source>
        <strain>ATCC 1020 / DSM 3700 / CBS 544.65 / FGSC A1164 / JCM 1740 / NRRL 181 / WB 181</strain>
    </source>
</reference>
<accession>A1DBH2</accession>
<proteinExistence type="inferred from homology"/>
<dbReference type="EMBL" id="DS027694">
    <property type="protein sequence ID" value="EAW20212.1"/>
    <property type="molecule type" value="Genomic_DNA"/>
</dbReference>
<dbReference type="RefSeq" id="XP_001262109.1">
    <property type="nucleotide sequence ID" value="XM_001262108.1"/>
</dbReference>
<dbReference type="SMR" id="A1DBH2"/>
<dbReference type="STRING" id="331117.A1DBH2"/>
<dbReference type="EnsemblFungi" id="EAW20212">
    <property type="protein sequence ID" value="EAW20212"/>
    <property type="gene ID" value="NFIA_098420"/>
</dbReference>
<dbReference type="GeneID" id="4588724"/>
<dbReference type="KEGG" id="nfi:NFIA_098420"/>
<dbReference type="VEuPathDB" id="FungiDB:NFIA_098420"/>
<dbReference type="eggNOG" id="KOG0162">
    <property type="taxonomic scope" value="Eukaryota"/>
</dbReference>
<dbReference type="HOGENOM" id="CLU_000192_7_6_1"/>
<dbReference type="OMA" id="NDQENQC"/>
<dbReference type="OrthoDB" id="6108017at2759"/>
<dbReference type="Proteomes" id="UP000006702">
    <property type="component" value="Unassembled WGS sequence"/>
</dbReference>
<dbReference type="GO" id="GO:0030479">
    <property type="term" value="C:actin cortical patch"/>
    <property type="evidence" value="ECO:0007669"/>
    <property type="project" value="UniProtKB-SubCell"/>
</dbReference>
<dbReference type="GO" id="GO:0051285">
    <property type="term" value="C:cell cortex of cell tip"/>
    <property type="evidence" value="ECO:0007669"/>
    <property type="project" value="EnsemblFungi"/>
</dbReference>
<dbReference type="GO" id="GO:0043332">
    <property type="term" value="C:mating projection tip"/>
    <property type="evidence" value="ECO:0007669"/>
    <property type="project" value="EnsemblFungi"/>
</dbReference>
<dbReference type="GO" id="GO:0031097">
    <property type="term" value="C:medial cortex"/>
    <property type="evidence" value="ECO:0007669"/>
    <property type="project" value="EnsemblFungi"/>
</dbReference>
<dbReference type="GO" id="GO:0045160">
    <property type="term" value="C:myosin I complex"/>
    <property type="evidence" value="ECO:0007669"/>
    <property type="project" value="EnsemblFungi"/>
</dbReference>
<dbReference type="GO" id="GO:0044853">
    <property type="term" value="C:plasma membrane raft"/>
    <property type="evidence" value="ECO:0007669"/>
    <property type="project" value="EnsemblFungi"/>
</dbReference>
<dbReference type="GO" id="GO:0005628">
    <property type="term" value="C:prospore membrane"/>
    <property type="evidence" value="ECO:0007669"/>
    <property type="project" value="EnsemblFungi"/>
</dbReference>
<dbReference type="GO" id="GO:0051015">
    <property type="term" value="F:actin filament binding"/>
    <property type="evidence" value="ECO:0007669"/>
    <property type="project" value="EnsemblFungi"/>
</dbReference>
<dbReference type="GO" id="GO:0071933">
    <property type="term" value="F:Arp2/3 complex binding"/>
    <property type="evidence" value="ECO:0007669"/>
    <property type="project" value="EnsemblFungi"/>
</dbReference>
<dbReference type="GO" id="GO:0005524">
    <property type="term" value="F:ATP binding"/>
    <property type="evidence" value="ECO:0007669"/>
    <property type="project" value="UniProtKB-KW"/>
</dbReference>
<dbReference type="GO" id="GO:0016787">
    <property type="term" value="F:hydrolase activity"/>
    <property type="evidence" value="ECO:0007669"/>
    <property type="project" value="UniProtKB-KW"/>
</dbReference>
<dbReference type="GO" id="GO:0000146">
    <property type="term" value="F:microfilament motor activity"/>
    <property type="evidence" value="ECO:0007669"/>
    <property type="project" value="EnsemblFungi"/>
</dbReference>
<dbReference type="GO" id="GO:0000147">
    <property type="term" value="P:actin cortical patch assembly"/>
    <property type="evidence" value="ECO:0007669"/>
    <property type="project" value="EnsemblFungi"/>
</dbReference>
<dbReference type="GO" id="GO:0051666">
    <property type="term" value="P:actin cortical patch localization"/>
    <property type="evidence" value="ECO:0007669"/>
    <property type="project" value="TreeGrafter"/>
</dbReference>
<dbReference type="GO" id="GO:0007015">
    <property type="term" value="P:actin filament organization"/>
    <property type="evidence" value="ECO:0007669"/>
    <property type="project" value="TreeGrafter"/>
</dbReference>
<dbReference type="GO" id="GO:0006897">
    <property type="term" value="P:endocytosis"/>
    <property type="evidence" value="ECO:0007669"/>
    <property type="project" value="EnsemblFungi"/>
</dbReference>
<dbReference type="GO" id="GO:0000281">
    <property type="term" value="P:mitotic cytokinesis"/>
    <property type="evidence" value="ECO:0007669"/>
    <property type="project" value="EnsemblFungi"/>
</dbReference>
<dbReference type="CDD" id="cd01378">
    <property type="entry name" value="MYSc_Myo1"/>
    <property type="match status" value="1"/>
</dbReference>
<dbReference type="CDD" id="cd11858">
    <property type="entry name" value="SH3_Myosin-I_fungi"/>
    <property type="match status" value="1"/>
</dbReference>
<dbReference type="FunFam" id="1.10.10.820:FF:000001">
    <property type="entry name" value="Myosin heavy chain"/>
    <property type="match status" value="1"/>
</dbReference>
<dbReference type="FunFam" id="1.20.120.720:FF:000015">
    <property type="entry name" value="Myosin I"/>
    <property type="match status" value="1"/>
</dbReference>
<dbReference type="FunFam" id="2.30.30.40:FF:000254">
    <property type="entry name" value="Myosin I MyoA/Myo5"/>
    <property type="match status" value="1"/>
</dbReference>
<dbReference type="FunFam" id="1.20.5.4820:FF:000004">
    <property type="entry name" value="Myosin IE"/>
    <property type="match status" value="1"/>
</dbReference>
<dbReference type="FunFam" id="1.20.58.530:FF:000007">
    <property type="entry name" value="Myosin IE"/>
    <property type="match status" value="1"/>
</dbReference>
<dbReference type="Gene3D" id="1.10.10.820">
    <property type="match status" value="1"/>
</dbReference>
<dbReference type="Gene3D" id="1.20.5.4820">
    <property type="match status" value="1"/>
</dbReference>
<dbReference type="Gene3D" id="1.20.58.530">
    <property type="match status" value="1"/>
</dbReference>
<dbReference type="Gene3D" id="3.40.850.10">
    <property type="entry name" value="Kinesin motor domain"/>
    <property type="match status" value="1"/>
</dbReference>
<dbReference type="Gene3D" id="1.20.120.720">
    <property type="entry name" value="Myosin VI head, motor domain, U50 subdomain"/>
    <property type="match status" value="1"/>
</dbReference>
<dbReference type="Gene3D" id="2.30.30.40">
    <property type="entry name" value="SH3 Domains"/>
    <property type="match status" value="1"/>
</dbReference>
<dbReference type="InterPro" id="IPR035535">
    <property type="entry name" value="Fungal_myosin-I_SH3"/>
</dbReference>
<dbReference type="InterPro" id="IPR036961">
    <property type="entry name" value="Kinesin_motor_dom_sf"/>
</dbReference>
<dbReference type="InterPro" id="IPR054489">
    <property type="entry name" value="Myo1_CA"/>
</dbReference>
<dbReference type="InterPro" id="IPR001609">
    <property type="entry name" value="Myosin_head_motor_dom-like"/>
</dbReference>
<dbReference type="InterPro" id="IPR010926">
    <property type="entry name" value="Myosin_TH1"/>
</dbReference>
<dbReference type="InterPro" id="IPR036072">
    <property type="entry name" value="MYSc_Myo1"/>
</dbReference>
<dbReference type="InterPro" id="IPR027417">
    <property type="entry name" value="P-loop_NTPase"/>
</dbReference>
<dbReference type="InterPro" id="IPR036028">
    <property type="entry name" value="SH3-like_dom_sf"/>
</dbReference>
<dbReference type="InterPro" id="IPR001452">
    <property type="entry name" value="SH3_domain"/>
</dbReference>
<dbReference type="PANTHER" id="PTHR13140">
    <property type="entry name" value="MYOSIN"/>
    <property type="match status" value="1"/>
</dbReference>
<dbReference type="PANTHER" id="PTHR13140:SF837">
    <property type="entry name" value="MYOSIN-3-RELATED"/>
    <property type="match status" value="1"/>
</dbReference>
<dbReference type="Pfam" id="PF22773">
    <property type="entry name" value="Myo1_CA"/>
    <property type="match status" value="1"/>
</dbReference>
<dbReference type="Pfam" id="PF00063">
    <property type="entry name" value="Myosin_head"/>
    <property type="match status" value="1"/>
</dbReference>
<dbReference type="Pfam" id="PF06017">
    <property type="entry name" value="Myosin_TH1"/>
    <property type="match status" value="1"/>
</dbReference>
<dbReference type="Pfam" id="PF00018">
    <property type="entry name" value="SH3_1"/>
    <property type="match status" value="1"/>
</dbReference>
<dbReference type="PRINTS" id="PR00193">
    <property type="entry name" value="MYOSINHEAVY"/>
</dbReference>
<dbReference type="SMART" id="SM00242">
    <property type="entry name" value="MYSc"/>
    <property type="match status" value="1"/>
</dbReference>
<dbReference type="SMART" id="SM00326">
    <property type="entry name" value="SH3"/>
    <property type="match status" value="1"/>
</dbReference>
<dbReference type="SUPFAM" id="SSF52540">
    <property type="entry name" value="P-loop containing nucleoside triphosphate hydrolases"/>
    <property type="match status" value="1"/>
</dbReference>
<dbReference type="SUPFAM" id="SSF50044">
    <property type="entry name" value="SH3-domain"/>
    <property type="match status" value="1"/>
</dbReference>
<dbReference type="PROSITE" id="PS51456">
    <property type="entry name" value="MYOSIN_MOTOR"/>
    <property type="match status" value="1"/>
</dbReference>
<dbReference type="PROSITE" id="PS50002">
    <property type="entry name" value="SH3"/>
    <property type="match status" value="1"/>
</dbReference>
<dbReference type="PROSITE" id="PS51757">
    <property type="entry name" value="TH1"/>
    <property type="match status" value="1"/>
</dbReference>
<protein>
    <recommendedName>
        <fullName>Myosin-1</fullName>
    </recommendedName>
    <alternativeName>
        <fullName>Class I unconventional myosin</fullName>
    </alternativeName>
    <alternativeName>
        <fullName>Type I myosin</fullName>
    </alternativeName>
</protein>
<feature type="chain" id="PRO_0000338557" description="Myosin-1">
    <location>
        <begin position="1"/>
        <end position="1250"/>
    </location>
</feature>
<feature type="domain" description="Myosin motor" evidence="4">
    <location>
        <begin position="51"/>
        <end position="730"/>
    </location>
</feature>
<feature type="domain" description="IQ 1">
    <location>
        <begin position="734"/>
        <end position="754"/>
    </location>
</feature>
<feature type="domain" description="IQ 2">
    <location>
        <begin position="755"/>
        <end position="780"/>
    </location>
</feature>
<feature type="domain" description="TH1" evidence="5">
    <location>
        <begin position="788"/>
        <end position="978"/>
    </location>
</feature>
<feature type="domain" description="SH3" evidence="3">
    <location>
        <begin position="1076"/>
        <end position="1137"/>
    </location>
</feature>
<feature type="region of interest" description="Disordered" evidence="6">
    <location>
        <begin position="1"/>
        <end position="43"/>
    </location>
</feature>
<feature type="region of interest" description="Actin-binding" evidence="1">
    <location>
        <begin position="419"/>
        <end position="501"/>
    </location>
</feature>
<feature type="region of interest" description="Disordered" evidence="6">
    <location>
        <begin position="962"/>
        <end position="1079"/>
    </location>
</feature>
<feature type="region of interest" description="Disordered" evidence="6">
    <location>
        <begin position="1126"/>
        <end position="1250"/>
    </location>
</feature>
<feature type="compositionally biased region" description="Pro residues" evidence="6">
    <location>
        <begin position="1021"/>
        <end position="1035"/>
    </location>
</feature>
<feature type="compositionally biased region" description="Low complexity" evidence="6">
    <location>
        <begin position="1036"/>
        <end position="1051"/>
    </location>
</feature>
<feature type="compositionally biased region" description="Pro residues" evidence="6">
    <location>
        <begin position="1064"/>
        <end position="1077"/>
    </location>
</feature>
<feature type="compositionally biased region" description="Pro residues" evidence="6">
    <location>
        <begin position="1139"/>
        <end position="1151"/>
    </location>
</feature>
<feature type="compositionally biased region" description="Low complexity" evidence="6">
    <location>
        <begin position="1152"/>
        <end position="1170"/>
    </location>
</feature>
<feature type="compositionally biased region" description="Polar residues" evidence="6">
    <location>
        <begin position="1201"/>
        <end position="1222"/>
    </location>
</feature>
<feature type="compositionally biased region" description="Low complexity" evidence="6">
    <location>
        <begin position="1223"/>
        <end position="1232"/>
    </location>
</feature>
<feature type="binding site" evidence="2">
    <location>
        <begin position="144"/>
        <end position="151"/>
    </location>
    <ligand>
        <name>ATP</name>
        <dbReference type="ChEBI" id="CHEBI:30616"/>
    </ligand>
</feature>
<feature type="modified residue" description="Phosphoserine" evidence="1">
    <location>
        <position position="372"/>
    </location>
</feature>
<sequence length="1250" mass="137301">MGHSRRPAGGEKKSRGFGRSKAAADVGDGRQTGGKPQVKKATFESTKKKEIGVSDLTLLSKISNEAINDNLKLRFEHDEIYTYIGHVLVSVNPFQDLGIYTDNVLQSYRGKNRLEVPPHVFAVAESAYYNMKSYKDNQCVIISGESGAGKTEAAKRIMQYIASVSGGTDSSIQHTKEMVLATNPLLESFGNAKTLRNNNSSRFGKYLELEFNTNGEPVGANITNYLLEKSRVVGQITNERNFHIFYQFTKAAPQKYRDLFGIQQPQSYLYTSRSKCYDVPGVDDSAEFRDTLNAMNVIGMTEGEQDDVFRMLAAILWIGNVQFAEDDSGNAVITDQSVVDYVAYLLEVDAAQVNKAFTIRVMETARGGRRGSVYEVPLNTVQALAVRDALAKAIYFNLFDWIVQRVNASLTARGEVANSIGILDIYGFEIFEKNSFEQLCINYVNEKLQQIFIQLTLKAEQDEYAREQIQWTPIKYFDNKVVCSLIEDKRPPGVFAALNDACATAHADSSAADNTFVGRLNFLSQNPNFENRQGQFIVKHYAGDVSYAVAGMTDKNKDQLLKDLLNLVGTSGNQFVHTLFPEQVNQDDKRRPPTASDKIKASANDLVATLMKAQPSYIRTIKPNDNKAPKEYNVGNVLHQIKYLGLQENVRIRRAGFAYRQTFDKFVERFYLLSPKTSYAGDYTWTGDAESGARQILKDTSIPAEEYQMGITKVFVKTPETLFALEAMRDRYWHNMAIRIQRAWRNYLRYRTECAIRIQRFWRRTTGGLEFIKLRDQGHQLLNGRKERRRMSLLGSRRFLGDYIGVGNKGGPGEMVRNGAGISGSEDILFSCRGEVLVSKFGRSSKPAPRILVLTNRHVYIIAQNLVNNQLVISSERTIPIGAIKAVSASNLKDDWFSIVVGSPQEPDPLVNCVFKTEFFTHLNNTLHGQLNLKIADHIEYNKKPGKLATVKVVKDPAVARDDSYKSGTIHTGPGEPANSVSKPTPRPKQVSARPVTKGKLLRPGGPGGGPSKLAARPTPAAQPLPRATPQPAAPQPAARAVPQPVAAVAASHTRTGSTASVRAPPPPPPAAAPAPKKPTAKVLYDFNSQQSNELSIKAGEIVQIVSKEGNGWWLCMNMTTSAQGWTPEAYLEEQVAPTPKPAPPPPPPAAPRSTPAPATNGAAAAAKAKPAPPAPPAKRPNMAARKAVPTPPPAPRDSAVSMNSHDSSGGSGRGTPNSMSNASLAGGLAEALRARQHAMQGKQDDDDDW</sequence>
<comment type="function">
    <text evidence="1">Type-I myosin implicated in the organization of the actin cytoskeleton. Required for proper actin cytoskeleton polarization. At the cell cortex, assembles in patch-like structures together with proteins from the actin-polymerizing machinery and promotes actin assembly. Functions as actin nucleation-promoting factor (NPF) for the Arp2/3 complex. Plays an important role in polarized growth, spore germination, hyphal morphogenesis, and septal wall formation (By similarity).</text>
</comment>
<comment type="subcellular location">
    <subcellularLocation>
        <location evidence="1">Cytoplasm</location>
        <location evidence="1">Cytoskeleton</location>
        <location evidence="1">Actin patch</location>
    </subcellularLocation>
    <text evidence="1">Localizes to cortical patch-like structures. Enriched at sites of polarized growth, like the growing hyphal tips and sites of septum formation (By similarity).</text>
</comment>
<comment type="domain">
    <text evidence="1">The myosin motor domain displays actin-stimulated ATPase activity and generates a mechanochemical force.</text>
</comment>
<comment type="domain">
    <text evidence="1">The tail domain participates in molecular interactions that specify the role of the motor domain (By similarity). It is composed of several tail homology (TH) domains, namely a putative phospholipid-binding myosin tail domain (also named TH1), an Ala- and Pro-rich domain (TH2), followed by an SH3 domain and a C-terminal acidic domain (TH3).</text>
</comment>
<comment type="PTM">
    <text evidence="1">Phosphorylation of the TEDS site (Ser-372) is required for the polarization of the actin cytoskeleton. Phosphorylation probably activates the myosin-I ATPase activity (By similarity).</text>
</comment>
<comment type="similarity">
    <text evidence="7">Belongs to the TRAFAC class myosin-kinesin ATPase superfamily. Myosin family.</text>
</comment>
<keyword id="KW-0009">Actin-binding</keyword>
<keyword id="KW-0067">ATP-binding</keyword>
<keyword id="KW-0963">Cytoplasm</keyword>
<keyword id="KW-0206">Cytoskeleton</keyword>
<keyword id="KW-0378">Hydrolase</keyword>
<keyword id="KW-0505">Motor protein</keyword>
<keyword id="KW-0518">Myosin</keyword>
<keyword id="KW-0547">Nucleotide-binding</keyword>
<keyword id="KW-0597">Phosphoprotein</keyword>
<keyword id="KW-1185">Reference proteome</keyword>
<keyword id="KW-0677">Repeat</keyword>
<keyword id="KW-0728">SH3 domain</keyword>
<organism>
    <name type="scientific">Neosartorya fischeri (strain ATCC 1020 / DSM 3700 / CBS 544.65 / FGSC A1164 / JCM 1740 / NRRL 181 / WB 181)</name>
    <name type="common">Aspergillus fischerianus</name>
    <dbReference type="NCBI Taxonomy" id="331117"/>
    <lineage>
        <taxon>Eukaryota</taxon>
        <taxon>Fungi</taxon>
        <taxon>Dikarya</taxon>
        <taxon>Ascomycota</taxon>
        <taxon>Pezizomycotina</taxon>
        <taxon>Eurotiomycetes</taxon>
        <taxon>Eurotiomycetidae</taxon>
        <taxon>Eurotiales</taxon>
        <taxon>Aspergillaceae</taxon>
        <taxon>Aspergillus</taxon>
        <taxon>Aspergillus subgen. Fumigati</taxon>
    </lineage>
</organism>
<evidence type="ECO:0000250" key="1"/>
<evidence type="ECO:0000255" key="2"/>
<evidence type="ECO:0000255" key="3">
    <source>
        <dbReference type="PROSITE-ProRule" id="PRU00192"/>
    </source>
</evidence>
<evidence type="ECO:0000255" key="4">
    <source>
        <dbReference type="PROSITE-ProRule" id="PRU00782"/>
    </source>
</evidence>
<evidence type="ECO:0000255" key="5">
    <source>
        <dbReference type="PROSITE-ProRule" id="PRU01093"/>
    </source>
</evidence>
<evidence type="ECO:0000256" key="6">
    <source>
        <dbReference type="SAM" id="MobiDB-lite"/>
    </source>
</evidence>
<evidence type="ECO:0000305" key="7"/>